<gene>
    <name evidence="1" type="primary">sat</name>
    <name type="ordered locus">BLi01780</name>
    <name type="ordered locus">BL02284</name>
</gene>
<comment type="catalytic activity">
    <reaction evidence="1">
        <text>sulfate + ATP + H(+) = adenosine 5'-phosphosulfate + diphosphate</text>
        <dbReference type="Rhea" id="RHEA:18133"/>
        <dbReference type="ChEBI" id="CHEBI:15378"/>
        <dbReference type="ChEBI" id="CHEBI:16189"/>
        <dbReference type="ChEBI" id="CHEBI:30616"/>
        <dbReference type="ChEBI" id="CHEBI:33019"/>
        <dbReference type="ChEBI" id="CHEBI:58243"/>
        <dbReference type="EC" id="2.7.7.4"/>
    </reaction>
</comment>
<comment type="pathway">
    <text evidence="1">Sulfur metabolism; hydrogen sulfide biosynthesis; sulfite from sulfate: step 1/3.</text>
</comment>
<comment type="similarity">
    <text evidence="1">Belongs to the sulfate adenylyltransferase family.</text>
</comment>
<protein>
    <recommendedName>
        <fullName evidence="1">Sulfate adenylyltransferase</fullName>
        <ecNumber evidence="1">2.7.7.4</ecNumber>
    </recommendedName>
    <alternativeName>
        <fullName evidence="1">ATP-sulfurylase</fullName>
    </alternativeName>
    <alternativeName>
        <fullName evidence="1">Sulfate adenylate transferase</fullName>
        <shortName evidence="1">SAT</shortName>
    </alternativeName>
</protein>
<sequence length="378" mass="42248">MSLAPHGGVLVNRVNEAYDFQHIAHEIELDVMAFSDLELIGIGAYSPLQGFMTEKDYLSVFENMRLSSGEVWTLPITLPVDEQKALSLKAGDTVRLTYNGETYGVIEIEDIYTPDKKTEAVNIYKTDELEHPGVKKLFDRGSVYVGGPITLIKRSVKQFPAHTFEPLETRKKFAELGWKTIVGFQTRNPVHRAHEYIQKTALETVDGLFLNPLVGETKSDDIPADVRMESYQVLLDGYYPKDRVFLGVFPAAMRYAGPKEAIFHALVRKNYGCTHFIVGRDHAGVGDYYGTYEAQELFDQFAPEEIGITPLKFEHSFYCNVCGSMATAKTCPHGKEHHVILSGTKVRAMLRSGEFPPSTFSRPEVIQTLIKGLAAGVS</sequence>
<accession>Q65JT9</accession>
<accession>Q62V94</accession>
<keyword id="KW-0067">ATP-binding</keyword>
<keyword id="KW-0547">Nucleotide-binding</keyword>
<keyword id="KW-0548">Nucleotidyltransferase</keyword>
<keyword id="KW-1185">Reference proteome</keyword>
<keyword id="KW-0808">Transferase</keyword>
<dbReference type="EC" id="2.7.7.4" evidence="1"/>
<dbReference type="EMBL" id="CP000002">
    <property type="protein sequence ID" value="AAU23315.1"/>
    <property type="molecule type" value="Genomic_DNA"/>
</dbReference>
<dbReference type="EMBL" id="AE017333">
    <property type="protein sequence ID" value="AAU40675.1"/>
    <property type="molecule type" value="Genomic_DNA"/>
</dbReference>
<dbReference type="RefSeq" id="WP_009328537.1">
    <property type="nucleotide sequence ID" value="NC_006322.1"/>
</dbReference>
<dbReference type="SMR" id="Q65JT9"/>
<dbReference type="STRING" id="279010.BL02284"/>
<dbReference type="GeneID" id="92861627"/>
<dbReference type="KEGG" id="bld:BLi01780"/>
<dbReference type="KEGG" id="bli:BL02284"/>
<dbReference type="PATRIC" id="fig|279010.13.peg.1780"/>
<dbReference type="eggNOG" id="COG2046">
    <property type="taxonomic scope" value="Bacteria"/>
</dbReference>
<dbReference type="HOGENOM" id="CLU_022950_1_1_9"/>
<dbReference type="UniPathway" id="UPA00140">
    <property type="reaction ID" value="UER00204"/>
</dbReference>
<dbReference type="Proteomes" id="UP000000606">
    <property type="component" value="Chromosome"/>
</dbReference>
<dbReference type="GO" id="GO:0005524">
    <property type="term" value="F:ATP binding"/>
    <property type="evidence" value="ECO:0007669"/>
    <property type="project" value="UniProtKB-KW"/>
</dbReference>
<dbReference type="GO" id="GO:0004781">
    <property type="term" value="F:sulfate adenylyltransferase (ATP) activity"/>
    <property type="evidence" value="ECO:0007669"/>
    <property type="project" value="UniProtKB-UniRule"/>
</dbReference>
<dbReference type="GO" id="GO:0070814">
    <property type="term" value="P:hydrogen sulfide biosynthetic process"/>
    <property type="evidence" value="ECO:0007669"/>
    <property type="project" value="UniProtKB-UniRule"/>
</dbReference>
<dbReference type="GO" id="GO:0000103">
    <property type="term" value="P:sulfate assimilation"/>
    <property type="evidence" value="ECO:0007669"/>
    <property type="project" value="UniProtKB-UniRule"/>
</dbReference>
<dbReference type="CDD" id="cd00517">
    <property type="entry name" value="ATPS"/>
    <property type="match status" value="1"/>
</dbReference>
<dbReference type="Gene3D" id="3.40.50.620">
    <property type="entry name" value="HUPs"/>
    <property type="match status" value="1"/>
</dbReference>
<dbReference type="Gene3D" id="3.10.400.10">
    <property type="entry name" value="Sulfate adenylyltransferase"/>
    <property type="match status" value="1"/>
</dbReference>
<dbReference type="HAMAP" id="MF_00066">
    <property type="entry name" value="Sulf_adenylyltr"/>
    <property type="match status" value="1"/>
</dbReference>
<dbReference type="InterPro" id="IPR025980">
    <property type="entry name" value="ATP-Sase_PUA-like_dom"/>
</dbReference>
<dbReference type="InterPro" id="IPR015947">
    <property type="entry name" value="PUA-like_sf"/>
</dbReference>
<dbReference type="InterPro" id="IPR014729">
    <property type="entry name" value="Rossmann-like_a/b/a_fold"/>
</dbReference>
<dbReference type="InterPro" id="IPR020792">
    <property type="entry name" value="SO4_adenylyltransferase_pro"/>
</dbReference>
<dbReference type="InterPro" id="IPR024951">
    <property type="entry name" value="Sulfurylase_cat_dom"/>
</dbReference>
<dbReference type="InterPro" id="IPR002650">
    <property type="entry name" value="Sulphate_adenylyltransferase"/>
</dbReference>
<dbReference type="NCBIfam" id="NF003166">
    <property type="entry name" value="PRK04149.1"/>
    <property type="match status" value="1"/>
</dbReference>
<dbReference type="NCBIfam" id="TIGR00339">
    <property type="entry name" value="sopT"/>
    <property type="match status" value="1"/>
</dbReference>
<dbReference type="PANTHER" id="PTHR43509">
    <property type="match status" value="1"/>
</dbReference>
<dbReference type="PANTHER" id="PTHR43509:SF1">
    <property type="entry name" value="SULFATE ADENYLYLTRANSFERASE"/>
    <property type="match status" value="1"/>
</dbReference>
<dbReference type="Pfam" id="PF01747">
    <property type="entry name" value="ATP-sulfurylase"/>
    <property type="match status" value="1"/>
</dbReference>
<dbReference type="Pfam" id="PF14306">
    <property type="entry name" value="PUA_2"/>
    <property type="match status" value="1"/>
</dbReference>
<dbReference type="SUPFAM" id="SSF52374">
    <property type="entry name" value="Nucleotidylyl transferase"/>
    <property type="match status" value="1"/>
</dbReference>
<dbReference type="SUPFAM" id="SSF88697">
    <property type="entry name" value="PUA domain-like"/>
    <property type="match status" value="1"/>
</dbReference>
<evidence type="ECO:0000255" key="1">
    <source>
        <dbReference type="HAMAP-Rule" id="MF_00066"/>
    </source>
</evidence>
<feature type="chain" id="PRO_0000340613" description="Sulfate adenylyltransferase">
    <location>
        <begin position="1"/>
        <end position="378"/>
    </location>
</feature>
<organism>
    <name type="scientific">Bacillus licheniformis (strain ATCC 14580 / DSM 13 / JCM 2505 / CCUG 7422 / NBRC 12200 / NCIMB 9375 / NCTC 10341 / NRRL NRS-1264 / Gibson 46)</name>
    <dbReference type="NCBI Taxonomy" id="279010"/>
    <lineage>
        <taxon>Bacteria</taxon>
        <taxon>Bacillati</taxon>
        <taxon>Bacillota</taxon>
        <taxon>Bacilli</taxon>
        <taxon>Bacillales</taxon>
        <taxon>Bacillaceae</taxon>
        <taxon>Bacillus</taxon>
    </lineage>
</organism>
<proteinExistence type="inferred from homology"/>
<name>SAT_BACLD</name>
<reference key="1">
    <citation type="journal article" date="2004" name="J. Mol. Microbiol. Biotechnol.">
        <title>The complete genome sequence of Bacillus licheniformis DSM13, an organism with great industrial potential.</title>
        <authorList>
            <person name="Veith B."/>
            <person name="Herzberg C."/>
            <person name="Steckel S."/>
            <person name="Feesche J."/>
            <person name="Maurer K.H."/>
            <person name="Ehrenreich P."/>
            <person name="Baeumer S."/>
            <person name="Henne A."/>
            <person name="Liesegang H."/>
            <person name="Merkl R."/>
            <person name="Ehrenreich A."/>
            <person name="Gottschalk G."/>
        </authorList>
    </citation>
    <scope>NUCLEOTIDE SEQUENCE [LARGE SCALE GENOMIC DNA]</scope>
    <source>
        <strain>ATCC 14580 / DSM 13 / JCM 2505 / CCUG 7422 / NBRC 12200 / NCIMB 9375 / NCTC 10341 / NRRL NRS-1264 / Gibson 46</strain>
    </source>
</reference>
<reference key="2">
    <citation type="journal article" date="2004" name="Genome Biol.">
        <title>Complete genome sequence of the industrial bacterium Bacillus licheniformis and comparisons with closely related Bacillus species.</title>
        <authorList>
            <person name="Rey M.W."/>
            <person name="Ramaiya P."/>
            <person name="Nelson B.A."/>
            <person name="Brody-Karpin S.D."/>
            <person name="Zaretsky E.J."/>
            <person name="Tang M."/>
            <person name="Lopez de Leon A."/>
            <person name="Xiang H."/>
            <person name="Gusti V."/>
            <person name="Clausen I.G."/>
            <person name="Olsen P.B."/>
            <person name="Rasmussen M.D."/>
            <person name="Andersen J.T."/>
            <person name="Joergensen P.L."/>
            <person name="Larsen T.S."/>
            <person name="Sorokin A."/>
            <person name="Bolotin A."/>
            <person name="Lapidus A."/>
            <person name="Galleron N."/>
            <person name="Ehrlich S.D."/>
            <person name="Berka R.M."/>
        </authorList>
    </citation>
    <scope>NUCLEOTIDE SEQUENCE [LARGE SCALE GENOMIC DNA]</scope>
    <source>
        <strain>ATCC 14580 / DSM 13 / JCM 2505 / CCUG 7422 / NBRC 12200 / NCIMB 9375 / NCTC 10341 / NRRL NRS-1264 / Gibson 46</strain>
    </source>
</reference>